<keyword id="KW-0028">Amino-acid biosynthesis</keyword>
<keyword id="KW-0100">Branched-chain amino acid biosynthesis</keyword>
<keyword id="KW-0963">Cytoplasm</keyword>
<keyword id="KW-0432">Leucine biosynthesis</keyword>
<keyword id="KW-0464">Manganese</keyword>
<keyword id="KW-0479">Metal-binding</keyword>
<keyword id="KW-0808">Transferase</keyword>
<organism>
    <name type="scientific">Dechloromonas aromatica (strain RCB)</name>
    <dbReference type="NCBI Taxonomy" id="159087"/>
    <lineage>
        <taxon>Bacteria</taxon>
        <taxon>Pseudomonadati</taxon>
        <taxon>Pseudomonadota</taxon>
        <taxon>Betaproteobacteria</taxon>
        <taxon>Rhodocyclales</taxon>
        <taxon>Azonexaceae</taxon>
        <taxon>Dechloromonas</taxon>
    </lineage>
</organism>
<proteinExistence type="inferred from homology"/>
<feature type="chain" id="PRO_1000149175" description="2-isopropylmalate synthase">
    <location>
        <begin position="1"/>
        <end position="513"/>
    </location>
</feature>
<feature type="domain" description="Pyruvate carboxyltransferase" evidence="1">
    <location>
        <begin position="5"/>
        <end position="267"/>
    </location>
</feature>
<feature type="region of interest" description="Regulatory domain" evidence="1">
    <location>
        <begin position="393"/>
        <end position="513"/>
    </location>
</feature>
<feature type="binding site" evidence="1">
    <location>
        <position position="14"/>
    </location>
    <ligand>
        <name>Mn(2+)</name>
        <dbReference type="ChEBI" id="CHEBI:29035"/>
    </ligand>
</feature>
<feature type="binding site" evidence="1">
    <location>
        <position position="202"/>
    </location>
    <ligand>
        <name>Mn(2+)</name>
        <dbReference type="ChEBI" id="CHEBI:29035"/>
    </ligand>
</feature>
<feature type="binding site" evidence="1">
    <location>
        <position position="204"/>
    </location>
    <ligand>
        <name>Mn(2+)</name>
        <dbReference type="ChEBI" id="CHEBI:29035"/>
    </ligand>
</feature>
<feature type="binding site" evidence="1">
    <location>
        <position position="238"/>
    </location>
    <ligand>
        <name>Mn(2+)</name>
        <dbReference type="ChEBI" id="CHEBI:29035"/>
    </ligand>
</feature>
<name>LEU1_DECAR</name>
<gene>
    <name evidence="1" type="primary">leuA</name>
    <name type="ordered locus">Daro_3071</name>
</gene>
<evidence type="ECO:0000255" key="1">
    <source>
        <dbReference type="HAMAP-Rule" id="MF_01025"/>
    </source>
</evidence>
<accession>Q47BI0</accession>
<dbReference type="EC" id="2.3.3.13" evidence="1"/>
<dbReference type="EMBL" id="CP000089">
    <property type="protein sequence ID" value="AAZ47801.1"/>
    <property type="molecule type" value="Genomic_DNA"/>
</dbReference>
<dbReference type="SMR" id="Q47BI0"/>
<dbReference type="STRING" id="159087.Daro_3071"/>
<dbReference type="KEGG" id="dar:Daro_3071"/>
<dbReference type="eggNOG" id="COG0119">
    <property type="taxonomic scope" value="Bacteria"/>
</dbReference>
<dbReference type="HOGENOM" id="CLU_022158_0_1_4"/>
<dbReference type="OrthoDB" id="9803573at2"/>
<dbReference type="UniPathway" id="UPA00048">
    <property type="reaction ID" value="UER00070"/>
</dbReference>
<dbReference type="GO" id="GO:0005829">
    <property type="term" value="C:cytosol"/>
    <property type="evidence" value="ECO:0007669"/>
    <property type="project" value="TreeGrafter"/>
</dbReference>
<dbReference type="GO" id="GO:0003852">
    <property type="term" value="F:2-isopropylmalate synthase activity"/>
    <property type="evidence" value="ECO:0007669"/>
    <property type="project" value="UniProtKB-UniRule"/>
</dbReference>
<dbReference type="GO" id="GO:0003985">
    <property type="term" value="F:acetyl-CoA C-acetyltransferase activity"/>
    <property type="evidence" value="ECO:0007669"/>
    <property type="project" value="UniProtKB-UniRule"/>
</dbReference>
<dbReference type="GO" id="GO:0030145">
    <property type="term" value="F:manganese ion binding"/>
    <property type="evidence" value="ECO:0007669"/>
    <property type="project" value="UniProtKB-UniRule"/>
</dbReference>
<dbReference type="GO" id="GO:0009098">
    <property type="term" value="P:L-leucine biosynthetic process"/>
    <property type="evidence" value="ECO:0007669"/>
    <property type="project" value="UniProtKB-UniRule"/>
</dbReference>
<dbReference type="CDD" id="cd07940">
    <property type="entry name" value="DRE_TIM_IPMS"/>
    <property type="match status" value="1"/>
</dbReference>
<dbReference type="FunFam" id="1.10.238.260:FF:000001">
    <property type="entry name" value="2-isopropylmalate synthase"/>
    <property type="match status" value="1"/>
</dbReference>
<dbReference type="FunFam" id="3.20.20.70:FF:000010">
    <property type="entry name" value="2-isopropylmalate synthase"/>
    <property type="match status" value="1"/>
</dbReference>
<dbReference type="FunFam" id="3.30.160.270:FF:000003">
    <property type="entry name" value="2-isopropylmalate synthase"/>
    <property type="match status" value="1"/>
</dbReference>
<dbReference type="Gene3D" id="1.10.238.260">
    <property type="match status" value="1"/>
</dbReference>
<dbReference type="Gene3D" id="3.30.160.270">
    <property type="match status" value="1"/>
</dbReference>
<dbReference type="Gene3D" id="3.20.20.70">
    <property type="entry name" value="Aldolase class I"/>
    <property type="match status" value="1"/>
</dbReference>
<dbReference type="HAMAP" id="MF_01025">
    <property type="entry name" value="LeuA_type1"/>
    <property type="match status" value="1"/>
</dbReference>
<dbReference type="InterPro" id="IPR050073">
    <property type="entry name" value="2-IPM_HCS-like"/>
</dbReference>
<dbReference type="InterPro" id="IPR013709">
    <property type="entry name" value="2-isopropylmalate_synth_dimer"/>
</dbReference>
<dbReference type="InterPro" id="IPR002034">
    <property type="entry name" value="AIPM/Hcit_synth_CS"/>
</dbReference>
<dbReference type="InterPro" id="IPR013785">
    <property type="entry name" value="Aldolase_TIM"/>
</dbReference>
<dbReference type="InterPro" id="IPR054691">
    <property type="entry name" value="LeuA/HCS_post-cat"/>
</dbReference>
<dbReference type="InterPro" id="IPR036230">
    <property type="entry name" value="LeuA_allosteric_dom_sf"/>
</dbReference>
<dbReference type="InterPro" id="IPR005671">
    <property type="entry name" value="LeuA_bact_synth"/>
</dbReference>
<dbReference type="InterPro" id="IPR000891">
    <property type="entry name" value="PYR_CT"/>
</dbReference>
<dbReference type="NCBIfam" id="TIGR00973">
    <property type="entry name" value="leuA_bact"/>
    <property type="match status" value="1"/>
</dbReference>
<dbReference type="NCBIfam" id="NF002086">
    <property type="entry name" value="PRK00915.1-3"/>
    <property type="match status" value="1"/>
</dbReference>
<dbReference type="NCBIfam" id="NF002087">
    <property type="entry name" value="PRK00915.1-4"/>
    <property type="match status" value="1"/>
</dbReference>
<dbReference type="PANTHER" id="PTHR10277:SF9">
    <property type="entry name" value="2-ISOPROPYLMALATE SYNTHASE 1, CHLOROPLASTIC-RELATED"/>
    <property type="match status" value="1"/>
</dbReference>
<dbReference type="PANTHER" id="PTHR10277">
    <property type="entry name" value="HOMOCITRATE SYNTHASE-RELATED"/>
    <property type="match status" value="1"/>
</dbReference>
<dbReference type="Pfam" id="PF22617">
    <property type="entry name" value="HCS_D2"/>
    <property type="match status" value="1"/>
</dbReference>
<dbReference type="Pfam" id="PF00682">
    <property type="entry name" value="HMGL-like"/>
    <property type="match status" value="1"/>
</dbReference>
<dbReference type="Pfam" id="PF08502">
    <property type="entry name" value="LeuA_dimer"/>
    <property type="match status" value="1"/>
</dbReference>
<dbReference type="SMART" id="SM00917">
    <property type="entry name" value="LeuA_dimer"/>
    <property type="match status" value="1"/>
</dbReference>
<dbReference type="SUPFAM" id="SSF110921">
    <property type="entry name" value="2-isopropylmalate synthase LeuA, allosteric (dimerisation) domain"/>
    <property type="match status" value="1"/>
</dbReference>
<dbReference type="SUPFAM" id="SSF51569">
    <property type="entry name" value="Aldolase"/>
    <property type="match status" value="1"/>
</dbReference>
<dbReference type="PROSITE" id="PS00815">
    <property type="entry name" value="AIPM_HOMOCIT_SYNTH_1"/>
    <property type="match status" value="1"/>
</dbReference>
<dbReference type="PROSITE" id="PS00816">
    <property type="entry name" value="AIPM_HOMOCIT_SYNTH_2"/>
    <property type="match status" value="1"/>
</dbReference>
<dbReference type="PROSITE" id="PS50991">
    <property type="entry name" value="PYR_CT"/>
    <property type="match status" value="1"/>
</dbReference>
<reference key="1">
    <citation type="journal article" date="2009" name="BMC Genomics">
        <title>Metabolic analysis of the soil microbe Dechloromonas aromatica str. RCB: indications of a surprisingly complex life-style and cryptic anaerobic pathways for aromatic degradation.</title>
        <authorList>
            <person name="Salinero K.K."/>
            <person name="Keller K."/>
            <person name="Feil W.S."/>
            <person name="Feil H."/>
            <person name="Trong S."/>
            <person name="Di Bartolo G."/>
            <person name="Lapidus A."/>
        </authorList>
    </citation>
    <scope>NUCLEOTIDE SEQUENCE [LARGE SCALE GENOMIC DNA]</scope>
    <source>
        <strain>RCB</strain>
    </source>
</reference>
<comment type="function">
    <text evidence="1">Catalyzes the condensation of the acetyl group of acetyl-CoA with 3-methyl-2-oxobutanoate (2-ketoisovalerate) to form 3-carboxy-3-hydroxy-4-methylpentanoate (2-isopropylmalate).</text>
</comment>
<comment type="catalytic activity">
    <reaction evidence="1">
        <text>3-methyl-2-oxobutanoate + acetyl-CoA + H2O = (2S)-2-isopropylmalate + CoA + H(+)</text>
        <dbReference type="Rhea" id="RHEA:21524"/>
        <dbReference type="ChEBI" id="CHEBI:1178"/>
        <dbReference type="ChEBI" id="CHEBI:11851"/>
        <dbReference type="ChEBI" id="CHEBI:15377"/>
        <dbReference type="ChEBI" id="CHEBI:15378"/>
        <dbReference type="ChEBI" id="CHEBI:57287"/>
        <dbReference type="ChEBI" id="CHEBI:57288"/>
        <dbReference type="EC" id="2.3.3.13"/>
    </reaction>
</comment>
<comment type="cofactor">
    <cofactor evidence="1">
        <name>Mn(2+)</name>
        <dbReference type="ChEBI" id="CHEBI:29035"/>
    </cofactor>
</comment>
<comment type="pathway">
    <text evidence="1">Amino-acid biosynthesis; L-leucine biosynthesis; L-leucine from 3-methyl-2-oxobutanoate: step 1/4.</text>
</comment>
<comment type="subunit">
    <text evidence="1">Homodimer.</text>
</comment>
<comment type="subcellular location">
    <subcellularLocation>
        <location evidence="1">Cytoplasm</location>
    </subcellularLocation>
</comment>
<comment type="similarity">
    <text evidence="1">Belongs to the alpha-IPM synthase/homocitrate synthase family. LeuA type 1 subfamily.</text>
</comment>
<sequence>MKQHLVIFDTTLRDGEQSPGASMTKEEKIRVARQLEKMRVDVIEAGFAAASPGDFDAIHSIAQTIKDSTVCSLARANENDIRRAGEAIKPAQSGRIHTFIATSPIHMEKKLRMTPDQVVEQAVKAIGWAREYTDDIEFSAEDAGRSDLDFLCRIFEEVIKAGATTINVPDTVGYNIPSQYAETMRQLIERVPNSDKVVWSVHCHNDLGLAVSNSLAAVLCGARQVECTINGLGERAGNAALEEIVMAVRTRADVFPVETRIDTTQIVPASKLVSQITGYPVQPNKAVVGANAFAHESGIHQDGVLKHRETYEIMRAQDVGWTQNKLVLGKHSGRNAFKNRLQELGIELESDEALNAAFARFKELADKKHEIFDEDLHALVSDDLVTPDQEYYKLVYSRVCSETGEMPRASVILNIGGVEHKAEADGGGPVDATFKAIESIAGSGAELLLYSVNAITTGTDAQGEVTTRLSKGDRIVNGNGADTDIVIASARSYLNALNKLHSTLDKVKAQGGV</sequence>
<protein>
    <recommendedName>
        <fullName evidence="1">2-isopropylmalate synthase</fullName>
        <ecNumber evidence="1">2.3.3.13</ecNumber>
    </recommendedName>
    <alternativeName>
        <fullName evidence="1">Alpha-IPM synthase</fullName>
    </alternativeName>
    <alternativeName>
        <fullName evidence="1">Alpha-isopropylmalate synthase</fullName>
    </alternativeName>
</protein>